<dbReference type="EC" id="2.1.1.190" evidence="1"/>
<dbReference type="EMBL" id="BX571965">
    <property type="protein sequence ID" value="CAH35509.1"/>
    <property type="molecule type" value="Genomic_DNA"/>
</dbReference>
<dbReference type="RefSeq" id="WP_004192701.1">
    <property type="nucleotide sequence ID" value="NZ_CP009538.1"/>
</dbReference>
<dbReference type="RefSeq" id="YP_108128.1">
    <property type="nucleotide sequence ID" value="NC_006350.1"/>
</dbReference>
<dbReference type="SMR" id="Q63UT8"/>
<dbReference type="STRING" id="272560.BPSL1508"/>
<dbReference type="GeneID" id="93060481"/>
<dbReference type="KEGG" id="bps:BPSL1508"/>
<dbReference type="PATRIC" id="fig|272560.51.peg.3545"/>
<dbReference type="eggNOG" id="COG2265">
    <property type="taxonomic scope" value="Bacteria"/>
</dbReference>
<dbReference type="Proteomes" id="UP000000605">
    <property type="component" value="Chromosome 1"/>
</dbReference>
<dbReference type="GO" id="GO:0051539">
    <property type="term" value="F:4 iron, 4 sulfur cluster binding"/>
    <property type="evidence" value="ECO:0007669"/>
    <property type="project" value="UniProtKB-KW"/>
</dbReference>
<dbReference type="GO" id="GO:0005506">
    <property type="term" value="F:iron ion binding"/>
    <property type="evidence" value="ECO:0007669"/>
    <property type="project" value="UniProtKB-UniRule"/>
</dbReference>
<dbReference type="GO" id="GO:0003723">
    <property type="term" value="F:RNA binding"/>
    <property type="evidence" value="ECO:0007669"/>
    <property type="project" value="InterPro"/>
</dbReference>
<dbReference type="GO" id="GO:0070041">
    <property type="term" value="F:rRNA (uridine-C5-)-methyltransferase activity"/>
    <property type="evidence" value="ECO:0007669"/>
    <property type="project" value="UniProtKB-UniRule"/>
</dbReference>
<dbReference type="GO" id="GO:0070475">
    <property type="term" value="P:rRNA base methylation"/>
    <property type="evidence" value="ECO:0007669"/>
    <property type="project" value="TreeGrafter"/>
</dbReference>
<dbReference type="CDD" id="cd02440">
    <property type="entry name" value="AdoMet_MTases"/>
    <property type="match status" value="1"/>
</dbReference>
<dbReference type="Gene3D" id="2.40.50.1070">
    <property type="match status" value="1"/>
</dbReference>
<dbReference type="Gene3D" id="2.40.50.140">
    <property type="entry name" value="Nucleic acid-binding proteins"/>
    <property type="match status" value="1"/>
</dbReference>
<dbReference type="Gene3D" id="3.40.50.150">
    <property type="entry name" value="Vaccinia Virus protein VP39"/>
    <property type="match status" value="1"/>
</dbReference>
<dbReference type="HAMAP" id="MF_01010">
    <property type="entry name" value="23SrRNA_methyltr_RlmD"/>
    <property type="match status" value="1"/>
</dbReference>
<dbReference type="InterPro" id="IPR001566">
    <property type="entry name" value="23S_rRNA_MeTrfase_RlmD"/>
</dbReference>
<dbReference type="InterPro" id="IPR030391">
    <property type="entry name" value="MeTrfase_TrmA_CS"/>
</dbReference>
<dbReference type="InterPro" id="IPR012340">
    <property type="entry name" value="NA-bd_OB-fold"/>
</dbReference>
<dbReference type="InterPro" id="IPR029063">
    <property type="entry name" value="SAM-dependent_MTases_sf"/>
</dbReference>
<dbReference type="InterPro" id="IPR002792">
    <property type="entry name" value="TRAM_dom"/>
</dbReference>
<dbReference type="InterPro" id="IPR010280">
    <property type="entry name" value="U5_MeTrfase_fam"/>
</dbReference>
<dbReference type="NCBIfam" id="NF009639">
    <property type="entry name" value="PRK13168.1"/>
    <property type="match status" value="1"/>
</dbReference>
<dbReference type="PANTHER" id="PTHR11061:SF49">
    <property type="entry name" value="23S RRNA (URACIL(1939)-C(5))-METHYLTRANSFERASE RLMD"/>
    <property type="match status" value="1"/>
</dbReference>
<dbReference type="PANTHER" id="PTHR11061">
    <property type="entry name" value="RNA M5U METHYLTRANSFERASE"/>
    <property type="match status" value="1"/>
</dbReference>
<dbReference type="Pfam" id="PF05958">
    <property type="entry name" value="tRNA_U5-meth_tr"/>
    <property type="match status" value="1"/>
</dbReference>
<dbReference type="SUPFAM" id="SSF50249">
    <property type="entry name" value="Nucleic acid-binding proteins"/>
    <property type="match status" value="1"/>
</dbReference>
<dbReference type="SUPFAM" id="SSF53335">
    <property type="entry name" value="S-adenosyl-L-methionine-dependent methyltransferases"/>
    <property type="match status" value="1"/>
</dbReference>
<dbReference type="PROSITE" id="PS51687">
    <property type="entry name" value="SAM_MT_RNA_M5U"/>
    <property type="match status" value="1"/>
</dbReference>
<dbReference type="PROSITE" id="PS50926">
    <property type="entry name" value="TRAM"/>
    <property type="match status" value="1"/>
</dbReference>
<dbReference type="PROSITE" id="PS01231">
    <property type="entry name" value="TRMA_2"/>
    <property type="match status" value="1"/>
</dbReference>
<gene>
    <name evidence="1" type="primary">rlmD</name>
    <name type="synonym">rumA</name>
    <name type="ordered locus">BPSL1508</name>
</gene>
<reference key="1">
    <citation type="journal article" date="2004" name="Proc. Natl. Acad. Sci. U.S.A.">
        <title>Genomic plasticity of the causative agent of melioidosis, Burkholderia pseudomallei.</title>
        <authorList>
            <person name="Holden M.T.G."/>
            <person name="Titball R.W."/>
            <person name="Peacock S.J."/>
            <person name="Cerdeno-Tarraga A.-M."/>
            <person name="Atkins T."/>
            <person name="Crossman L.C."/>
            <person name="Pitt T."/>
            <person name="Churcher C."/>
            <person name="Mungall K.L."/>
            <person name="Bentley S.D."/>
            <person name="Sebaihia M."/>
            <person name="Thomson N.R."/>
            <person name="Bason N."/>
            <person name="Beacham I.R."/>
            <person name="Brooks K."/>
            <person name="Brown K.A."/>
            <person name="Brown N.F."/>
            <person name="Challis G.L."/>
            <person name="Cherevach I."/>
            <person name="Chillingworth T."/>
            <person name="Cronin A."/>
            <person name="Crossett B."/>
            <person name="Davis P."/>
            <person name="DeShazer D."/>
            <person name="Feltwell T."/>
            <person name="Fraser A."/>
            <person name="Hance Z."/>
            <person name="Hauser H."/>
            <person name="Holroyd S."/>
            <person name="Jagels K."/>
            <person name="Keith K.E."/>
            <person name="Maddison M."/>
            <person name="Moule S."/>
            <person name="Price C."/>
            <person name="Quail M.A."/>
            <person name="Rabbinowitsch E."/>
            <person name="Rutherford K."/>
            <person name="Sanders M."/>
            <person name="Simmonds M."/>
            <person name="Songsivilai S."/>
            <person name="Stevens K."/>
            <person name="Tumapa S."/>
            <person name="Vesaratchavest M."/>
            <person name="Whitehead S."/>
            <person name="Yeats C."/>
            <person name="Barrell B.G."/>
            <person name="Oyston P.C.F."/>
            <person name="Parkhill J."/>
        </authorList>
    </citation>
    <scope>NUCLEOTIDE SEQUENCE [LARGE SCALE GENOMIC DNA]</scope>
    <source>
        <strain>K96243</strain>
    </source>
</reference>
<name>RLMD_BURPS</name>
<keyword id="KW-0004">4Fe-4S</keyword>
<keyword id="KW-0408">Iron</keyword>
<keyword id="KW-0411">Iron-sulfur</keyword>
<keyword id="KW-0479">Metal-binding</keyword>
<keyword id="KW-0489">Methyltransferase</keyword>
<keyword id="KW-1185">Reference proteome</keyword>
<keyword id="KW-0698">rRNA processing</keyword>
<keyword id="KW-0949">S-adenosyl-L-methionine</keyword>
<keyword id="KW-0808">Transferase</keyword>
<sequence length="465" mass="51030">MSEAVPLSTRRASSAGDAPGRAPVLDIDSLDMEARGVGRVVDENGEPGKVIFVEGALPGERVTYSSFRRKPTYEQAQVVDILRPSVMRTQPKCAFFGTCGGCSMQHLDMRAQVAIKQRVLEDNLWHLAKLRAEAMFAPIHGPSWGYRYRARLTVRHVAKKGGVLVGFHEKKSSYVADMTSCEVLPPHVSAMLVPLRRLVEQLSIRDRMPQIELAVGARVTALVLRVLEPINAADEALLREFADTHRVQFWLQPKGPDTVAPFYPLDAQLDYTLPEFGIRMPFKPTDFTQVNHQINRVLVGRALRLLAPERGDRVLDLFCGIGNFTLPLARLAREVVGIEGSDALTARALENAKENGVDGHTSFACRNLFEVTADDLRALGAFDKFLVDPPREGALAVSKALAEIAQSGAGPLPARIVYVSCNPSTLARDAGLLVHEAGYRLKGAGVVNMFPHTSHVESIALFERD</sequence>
<comment type="function">
    <text evidence="1">Catalyzes the formation of 5-methyl-uridine at position 1939 (m5U1939) in 23S rRNA.</text>
</comment>
<comment type="catalytic activity">
    <reaction evidence="1">
        <text>uridine(1939) in 23S rRNA + S-adenosyl-L-methionine = 5-methyluridine(1939) in 23S rRNA + S-adenosyl-L-homocysteine + H(+)</text>
        <dbReference type="Rhea" id="RHEA:42908"/>
        <dbReference type="Rhea" id="RHEA-COMP:10278"/>
        <dbReference type="Rhea" id="RHEA-COMP:10279"/>
        <dbReference type="ChEBI" id="CHEBI:15378"/>
        <dbReference type="ChEBI" id="CHEBI:57856"/>
        <dbReference type="ChEBI" id="CHEBI:59789"/>
        <dbReference type="ChEBI" id="CHEBI:65315"/>
        <dbReference type="ChEBI" id="CHEBI:74447"/>
        <dbReference type="EC" id="2.1.1.190"/>
    </reaction>
</comment>
<comment type="similarity">
    <text evidence="1">Belongs to the class I-like SAM-binding methyltransferase superfamily. RNA M5U methyltransferase family. RlmD subfamily.</text>
</comment>
<proteinExistence type="inferred from homology"/>
<accession>Q63UT8</accession>
<feature type="chain" id="PRO_0000161891" description="23S rRNA (uracil(1939)-C(5))-methyltransferase RlmD">
    <location>
        <begin position="1"/>
        <end position="465"/>
    </location>
</feature>
<feature type="domain" description="TRAM" evidence="1">
    <location>
        <begin position="16"/>
        <end position="80"/>
    </location>
</feature>
<feature type="region of interest" description="Disordered" evidence="2">
    <location>
        <begin position="1"/>
        <end position="24"/>
    </location>
</feature>
<feature type="active site" description="Nucleophile" evidence="1">
    <location>
        <position position="421"/>
    </location>
</feature>
<feature type="binding site" evidence="1">
    <location>
        <position position="93"/>
    </location>
    <ligand>
        <name>[4Fe-4S] cluster</name>
        <dbReference type="ChEBI" id="CHEBI:49883"/>
    </ligand>
</feature>
<feature type="binding site" evidence="1">
    <location>
        <position position="99"/>
    </location>
    <ligand>
        <name>[4Fe-4S] cluster</name>
        <dbReference type="ChEBI" id="CHEBI:49883"/>
    </ligand>
</feature>
<feature type="binding site" evidence="1">
    <location>
        <position position="102"/>
    </location>
    <ligand>
        <name>[4Fe-4S] cluster</name>
        <dbReference type="ChEBI" id="CHEBI:49883"/>
    </ligand>
</feature>
<feature type="binding site" evidence="1">
    <location>
        <position position="181"/>
    </location>
    <ligand>
        <name>[4Fe-4S] cluster</name>
        <dbReference type="ChEBI" id="CHEBI:49883"/>
    </ligand>
</feature>
<feature type="binding site" evidence="1">
    <location>
        <position position="289"/>
    </location>
    <ligand>
        <name>S-adenosyl-L-methionine</name>
        <dbReference type="ChEBI" id="CHEBI:59789"/>
    </ligand>
</feature>
<feature type="binding site" evidence="1">
    <location>
        <position position="318"/>
    </location>
    <ligand>
        <name>S-adenosyl-L-methionine</name>
        <dbReference type="ChEBI" id="CHEBI:59789"/>
    </ligand>
</feature>
<feature type="binding site" evidence="1">
    <location>
        <position position="323"/>
    </location>
    <ligand>
        <name>S-adenosyl-L-methionine</name>
        <dbReference type="ChEBI" id="CHEBI:59789"/>
    </ligand>
</feature>
<feature type="binding site" evidence="1">
    <location>
        <position position="339"/>
    </location>
    <ligand>
        <name>S-adenosyl-L-methionine</name>
        <dbReference type="ChEBI" id="CHEBI:59789"/>
    </ligand>
</feature>
<feature type="binding site" evidence="1">
    <location>
        <position position="367"/>
    </location>
    <ligand>
        <name>S-adenosyl-L-methionine</name>
        <dbReference type="ChEBI" id="CHEBI:59789"/>
    </ligand>
</feature>
<feature type="binding site" evidence="1">
    <location>
        <position position="388"/>
    </location>
    <ligand>
        <name>S-adenosyl-L-methionine</name>
        <dbReference type="ChEBI" id="CHEBI:59789"/>
    </ligand>
</feature>
<protein>
    <recommendedName>
        <fullName evidence="1">23S rRNA (uracil(1939)-C(5))-methyltransferase RlmD</fullName>
        <ecNumber evidence="1">2.1.1.190</ecNumber>
    </recommendedName>
    <alternativeName>
        <fullName evidence="1">23S rRNA(m5U1939)-methyltransferase</fullName>
    </alternativeName>
</protein>
<organism>
    <name type="scientific">Burkholderia pseudomallei (strain K96243)</name>
    <dbReference type="NCBI Taxonomy" id="272560"/>
    <lineage>
        <taxon>Bacteria</taxon>
        <taxon>Pseudomonadati</taxon>
        <taxon>Pseudomonadota</taxon>
        <taxon>Betaproteobacteria</taxon>
        <taxon>Burkholderiales</taxon>
        <taxon>Burkholderiaceae</taxon>
        <taxon>Burkholderia</taxon>
        <taxon>pseudomallei group</taxon>
    </lineage>
</organism>
<evidence type="ECO:0000255" key="1">
    <source>
        <dbReference type="HAMAP-Rule" id="MF_01010"/>
    </source>
</evidence>
<evidence type="ECO:0000256" key="2">
    <source>
        <dbReference type="SAM" id="MobiDB-lite"/>
    </source>
</evidence>